<reference key="1">
    <citation type="journal article" date="2005" name="Nucleic Acids Res.">
        <title>Genome dynamics and diversity of Shigella species, the etiologic agents of bacillary dysentery.</title>
        <authorList>
            <person name="Yang F."/>
            <person name="Yang J."/>
            <person name="Zhang X."/>
            <person name="Chen L."/>
            <person name="Jiang Y."/>
            <person name="Yan Y."/>
            <person name="Tang X."/>
            <person name="Wang J."/>
            <person name="Xiong Z."/>
            <person name="Dong J."/>
            <person name="Xue Y."/>
            <person name="Zhu Y."/>
            <person name="Xu X."/>
            <person name="Sun L."/>
            <person name="Chen S."/>
            <person name="Nie H."/>
            <person name="Peng J."/>
            <person name="Xu J."/>
            <person name="Wang Y."/>
            <person name="Yuan Z."/>
            <person name="Wen Y."/>
            <person name="Yao Z."/>
            <person name="Shen Y."/>
            <person name="Qiang B."/>
            <person name="Hou Y."/>
            <person name="Yu J."/>
            <person name="Jin Q."/>
        </authorList>
    </citation>
    <scope>NUCLEOTIDE SEQUENCE [LARGE SCALE GENOMIC DNA]</scope>
    <source>
        <strain>Sd197</strain>
    </source>
</reference>
<comment type="function">
    <text evidence="1">Catalyzes the formation of 6,7-dimethyl-8-ribityllumazine by condensation of 5-amino-6-(D-ribitylamino)uracil with 3,4-dihydroxy-2-butanone 4-phosphate. This is the penultimate step in the biosynthesis of riboflavin.</text>
</comment>
<comment type="catalytic activity">
    <reaction evidence="1">
        <text>(2S)-2-hydroxy-3-oxobutyl phosphate + 5-amino-6-(D-ribitylamino)uracil = 6,7-dimethyl-8-(1-D-ribityl)lumazine + phosphate + 2 H2O + H(+)</text>
        <dbReference type="Rhea" id="RHEA:26152"/>
        <dbReference type="ChEBI" id="CHEBI:15377"/>
        <dbReference type="ChEBI" id="CHEBI:15378"/>
        <dbReference type="ChEBI" id="CHEBI:15934"/>
        <dbReference type="ChEBI" id="CHEBI:43474"/>
        <dbReference type="ChEBI" id="CHEBI:58201"/>
        <dbReference type="ChEBI" id="CHEBI:58830"/>
        <dbReference type="EC" id="2.5.1.78"/>
    </reaction>
</comment>
<comment type="pathway">
    <text evidence="1">Cofactor biosynthesis; riboflavin biosynthesis; riboflavin from 2-hydroxy-3-oxobutyl phosphate and 5-amino-6-(D-ribitylamino)uracil: step 1/2.</text>
</comment>
<comment type="subunit">
    <text evidence="1">Forms an icosahedral capsid composed of 60 subunits, arranged as a dodecamer of pentamers.</text>
</comment>
<comment type="similarity">
    <text evidence="1">Belongs to the DMRL synthase family.</text>
</comment>
<accession>Q32JG9</accession>
<keyword id="KW-1185">Reference proteome</keyword>
<keyword id="KW-0686">Riboflavin biosynthesis</keyword>
<keyword id="KW-0808">Transferase</keyword>
<protein>
    <recommendedName>
        <fullName evidence="1">6,7-dimethyl-8-ribityllumazine synthase</fullName>
        <shortName evidence="1">DMRL synthase</shortName>
        <shortName evidence="1">LS</shortName>
        <shortName evidence="1">Lumazine synthase</shortName>
        <ecNumber evidence="1">2.5.1.78</ecNumber>
    </recommendedName>
</protein>
<evidence type="ECO:0000255" key="1">
    <source>
        <dbReference type="HAMAP-Rule" id="MF_00178"/>
    </source>
</evidence>
<name>RISB_SHIDS</name>
<dbReference type="EC" id="2.5.1.78" evidence="1"/>
<dbReference type="EMBL" id="CP000034">
    <property type="protein sequence ID" value="ABB60538.1"/>
    <property type="molecule type" value="Genomic_DNA"/>
</dbReference>
<dbReference type="RefSeq" id="YP_402027.1">
    <property type="nucleotide sequence ID" value="NC_007606.1"/>
</dbReference>
<dbReference type="SMR" id="Q32JG9"/>
<dbReference type="STRING" id="300267.SDY_0319"/>
<dbReference type="EnsemblBacteria" id="ABB60538">
    <property type="protein sequence ID" value="ABB60538"/>
    <property type="gene ID" value="SDY_0319"/>
</dbReference>
<dbReference type="KEGG" id="sdy:SDY_0319"/>
<dbReference type="PATRIC" id="fig|300267.13.peg.368"/>
<dbReference type="HOGENOM" id="CLU_089358_1_1_6"/>
<dbReference type="UniPathway" id="UPA00275">
    <property type="reaction ID" value="UER00404"/>
</dbReference>
<dbReference type="Proteomes" id="UP000002716">
    <property type="component" value="Chromosome"/>
</dbReference>
<dbReference type="GO" id="GO:0005829">
    <property type="term" value="C:cytosol"/>
    <property type="evidence" value="ECO:0007669"/>
    <property type="project" value="TreeGrafter"/>
</dbReference>
<dbReference type="GO" id="GO:0009349">
    <property type="term" value="C:riboflavin synthase complex"/>
    <property type="evidence" value="ECO:0007669"/>
    <property type="project" value="InterPro"/>
</dbReference>
<dbReference type="GO" id="GO:0000906">
    <property type="term" value="F:6,7-dimethyl-8-ribityllumazine synthase activity"/>
    <property type="evidence" value="ECO:0007669"/>
    <property type="project" value="UniProtKB-UniRule"/>
</dbReference>
<dbReference type="GO" id="GO:0009231">
    <property type="term" value="P:riboflavin biosynthetic process"/>
    <property type="evidence" value="ECO:0007669"/>
    <property type="project" value="UniProtKB-UniRule"/>
</dbReference>
<dbReference type="CDD" id="cd09209">
    <property type="entry name" value="Lumazine_synthase-I"/>
    <property type="match status" value="1"/>
</dbReference>
<dbReference type="FunFam" id="3.40.50.960:FF:000001">
    <property type="entry name" value="6,7-dimethyl-8-ribityllumazine synthase"/>
    <property type="match status" value="1"/>
</dbReference>
<dbReference type="Gene3D" id="3.40.50.960">
    <property type="entry name" value="Lumazine/riboflavin synthase"/>
    <property type="match status" value="1"/>
</dbReference>
<dbReference type="HAMAP" id="MF_00178">
    <property type="entry name" value="Lumazine_synth"/>
    <property type="match status" value="1"/>
</dbReference>
<dbReference type="InterPro" id="IPR034964">
    <property type="entry name" value="LS"/>
</dbReference>
<dbReference type="InterPro" id="IPR002180">
    <property type="entry name" value="LS/RS"/>
</dbReference>
<dbReference type="InterPro" id="IPR036467">
    <property type="entry name" value="LS/RS_sf"/>
</dbReference>
<dbReference type="NCBIfam" id="TIGR00114">
    <property type="entry name" value="lumazine-synth"/>
    <property type="match status" value="1"/>
</dbReference>
<dbReference type="NCBIfam" id="NF000812">
    <property type="entry name" value="PRK00061.1-4"/>
    <property type="match status" value="1"/>
</dbReference>
<dbReference type="PANTHER" id="PTHR21058:SF0">
    <property type="entry name" value="6,7-DIMETHYL-8-RIBITYLLUMAZINE SYNTHASE"/>
    <property type="match status" value="1"/>
</dbReference>
<dbReference type="PANTHER" id="PTHR21058">
    <property type="entry name" value="6,7-DIMETHYL-8-RIBITYLLUMAZINE SYNTHASE DMRL SYNTHASE LUMAZINE SYNTHASE"/>
    <property type="match status" value="1"/>
</dbReference>
<dbReference type="Pfam" id="PF00885">
    <property type="entry name" value="DMRL_synthase"/>
    <property type="match status" value="1"/>
</dbReference>
<dbReference type="SUPFAM" id="SSF52121">
    <property type="entry name" value="Lumazine synthase"/>
    <property type="match status" value="1"/>
</dbReference>
<feature type="chain" id="PRO_1000040517" description="6,7-dimethyl-8-ribityllumazine synthase">
    <location>
        <begin position="1"/>
        <end position="156"/>
    </location>
</feature>
<feature type="active site" description="Proton donor" evidence="1">
    <location>
        <position position="89"/>
    </location>
</feature>
<feature type="binding site" evidence="1">
    <location>
        <position position="22"/>
    </location>
    <ligand>
        <name>5-amino-6-(D-ribitylamino)uracil</name>
        <dbReference type="ChEBI" id="CHEBI:15934"/>
    </ligand>
</feature>
<feature type="binding site" evidence="1">
    <location>
        <begin position="57"/>
        <end position="59"/>
    </location>
    <ligand>
        <name>5-amino-6-(D-ribitylamino)uracil</name>
        <dbReference type="ChEBI" id="CHEBI:15934"/>
    </ligand>
</feature>
<feature type="binding site" evidence="1">
    <location>
        <begin position="81"/>
        <end position="83"/>
    </location>
    <ligand>
        <name>5-amino-6-(D-ribitylamino)uracil</name>
        <dbReference type="ChEBI" id="CHEBI:15934"/>
    </ligand>
</feature>
<feature type="binding site" evidence="1">
    <location>
        <begin position="86"/>
        <end position="87"/>
    </location>
    <ligand>
        <name>(2S)-2-hydroxy-3-oxobutyl phosphate</name>
        <dbReference type="ChEBI" id="CHEBI:58830"/>
    </ligand>
</feature>
<feature type="binding site" evidence="1">
    <location>
        <position position="114"/>
    </location>
    <ligand>
        <name>5-amino-6-(D-ribitylamino)uracil</name>
        <dbReference type="ChEBI" id="CHEBI:15934"/>
    </ligand>
</feature>
<feature type="binding site" evidence="1">
    <location>
        <position position="128"/>
    </location>
    <ligand>
        <name>(2S)-2-hydroxy-3-oxobutyl phosphate</name>
        <dbReference type="ChEBI" id="CHEBI:58830"/>
    </ligand>
</feature>
<organism>
    <name type="scientific">Shigella dysenteriae serotype 1 (strain Sd197)</name>
    <dbReference type="NCBI Taxonomy" id="300267"/>
    <lineage>
        <taxon>Bacteria</taxon>
        <taxon>Pseudomonadati</taxon>
        <taxon>Pseudomonadota</taxon>
        <taxon>Gammaproteobacteria</taxon>
        <taxon>Enterobacterales</taxon>
        <taxon>Enterobacteriaceae</taxon>
        <taxon>Shigella</taxon>
    </lineage>
</organism>
<sequence length="156" mass="16157">MNIIEANVATPDARVAITIARFNNFINDSLLEGAIDALKRIGQVKDENITVVWVPGAYELPLAAGALAKTGKYDAVIALGTVIRGGTAHFEYVAGGASNGLAHVAQDSEIPVAFGVLTTESIEQAIERAGTKAGNKGAEAALTALEMINVLKAIKA</sequence>
<proteinExistence type="inferred from homology"/>
<gene>
    <name evidence="1" type="primary">ribH</name>
    <name type="ordered locus">SDY_0319</name>
</gene>